<organism evidence="21">
    <name type="scientific">Caenorhabditis elegans</name>
    <dbReference type="NCBI Taxonomy" id="6239"/>
    <lineage>
        <taxon>Eukaryota</taxon>
        <taxon>Metazoa</taxon>
        <taxon>Ecdysozoa</taxon>
        <taxon>Nematoda</taxon>
        <taxon>Chromadorea</taxon>
        <taxon>Rhabditida</taxon>
        <taxon>Rhabditina</taxon>
        <taxon>Rhabditomorpha</taxon>
        <taxon>Rhabditoidea</taxon>
        <taxon>Rhabditidae</taxon>
        <taxon>Peloderinae</taxon>
        <taxon>Caenorhabditis</taxon>
    </lineage>
</organism>
<reference evidence="19" key="1">
    <citation type="journal article" date="2003" name="J. Neurochem.">
        <title>Cloning and characterization of a Caenorhabditis elegans D2-like dopamine receptor.</title>
        <authorList>
            <person name="Suo S."/>
            <person name="Sasagawa N."/>
            <person name="Ishiura S."/>
        </authorList>
    </citation>
    <scope>NUCLEOTIDE SEQUENCE [MRNA] (ISOFORM A)</scope>
    <scope>FUNCTION</scope>
    <scope>SUBCELLULAR LOCATION</scope>
    <scope>TISSUE SPECIFICITY</scope>
</reference>
<reference evidence="21" key="2">
    <citation type="journal article" date="1998" name="Science">
        <title>Genome sequence of the nematode C. elegans: a platform for investigating biology.</title>
        <authorList>
            <consortium name="The C. elegans sequencing consortium"/>
        </authorList>
    </citation>
    <scope>NUCLEOTIDE SEQUENCE [LARGE SCALE GENOMIC DNA]</scope>
    <source>
        <strain evidence="21">Bristol N2</strain>
    </source>
</reference>
<reference evidence="19" key="3">
    <citation type="journal article" date="2003" name="Dev. Biol.">
        <title>LIM homeobox gene-dependent expression of biogenic amine receptors in restricted regions of the C. elegans nervous system.</title>
        <authorList>
            <person name="Tsalik E.L."/>
            <person name="Niacaris T."/>
            <person name="Wenick A.S."/>
            <person name="Pau K."/>
            <person name="Avery L."/>
            <person name="Hobert O."/>
        </authorList>
    </citation>
    <scope>TISSUE SPECIFICITY</scope>
    <scope>DEVELOPMENTAL STAGE</scope>
</reference>
<reference evidence="19" key="4">
    <citation type="journal article" date="2009" name="EMBO J.">
        <title>Dopamine counteracts octopamine signalling in a neural circuit mediating food response in C. elegans.</title>
        <authorList>
            <person name="Suo S."/>
            <person name="Culotti J.G."/>
            <person name="Van Tol H.H."/>
        </authorList>
    </citation>
    <scope>FUNCTION</scope>
    <scope>TISSUE SPECIFICITY</scope>
</reference>
<reference evidence="19" key="5">
    <citation type="journal article" date="2010" name="Mol. Pharmacol.">
        <title>Molecular mechanisms of amphetamine actions in Caenorhabditis elegans.</title>
        <authorList>
            <person name="Carvelli L."/>
            <person name="Matthies D.S."/>
            <person name="Galli A."/>
        </authorList>
    </citation>
    <scope>ROLE IN SWIMMING-INDUCED PARALYSIS</scope>
</reference>
<reference evidence="19" key="6">
    <citation type="journal article" date="2012" name="J. Mol. Signal.">
        <title>The Caenorhabditis elegans D2-like dopamine receptor DOP-2 physically interacts with GPA-14, a Galphai subunit.</title>
        <authorList>
            <person name="Pandey P."/>
            <person name="Harbinder S."/>
        </authorList>
    </citation>
    <scope>INTERACTION WITH GPA-14</scope>
    <scope>MUTAGENESIS OF 183-PRO--VAL-849</scope>
</reference>
<reference evidence="19" key="7">
    <citation type="journal article" date="2012" name="PLoS Genet.">
        <title>C. elegans dopaminergic D2-like receptors delimit recurrent cholinergic-mediated motor programs during a goal-oriented behavior.</title>
        <authorList>
            <person name="Correa P."/>
            <person name="LeBoeuf B."/>
            <person name="Garcia L.R."/>
        </authorList>
    </citation>
    <scope>FUNCTION</scope>
    <scope>TISSUE SPECIFICITY</scope>
</reference>
<reference evidence="19" key="8">
    <citation type="journal article" date="2013" name="Behav. Brain Funct.">
        <title>GPA-14, a Galpha(i) subunit mediates dopaminergic behavioral plasticity in C. elegans.</title>
        <authorList>
            <person name="Mersha M."/>
            <person name="Formisano R."/>
            <person name="McDonald R."/>
            <person name="Pandey P."/>
            <person name="Tavernarakis N."/>
            <person name="Harbinder S."/>
        </authorList>
    </citation>
    <scope>FUNCTION</scope>
</reference>
<reference evidence="19" key="9">
    <citation type="journal article" date="2013" name="Eur. J. Neurosci.">
        <title>Nicotine-motivated behavior in Caenorhabditis elegans requires the nicotinic acetylcholine receptor subunits acr-5 and acr-15.</title>
        <authorList>
            <person name="Sellings L."/>
            <person name="Pereira S."/>
            <person name="Qian C."/>
            <person name="Dixon-McDougall T."/>
            <person name="Nowak C."/>
            <person name="Zhao B."/>
            <person name="Tyndale R.F."/>
            <person name="van der Kooy D."/>
        </authorList>
    </citation>
    <scope>ROLE IN DRUG SENSITIVITY</scope>
</reference>
<reference evidence="19" key="10">
    <citation type="journal article" date="2014" name="PLoS ONE">
        <title>Dopamine receptors antagonistically regulate behavioral choice between conflicting alternatives in C. elegans.</title>
        <authorList>
            <person name="Wang D."/>
            <person name="Yu Y."/>
            <person name="Li Y."/>
            <person name="Wang Y."/>
            <person name="Wang D."/>
        </authorList>
    </citation>
    <scope>FUNCTION</scope>
</reference>
<reference evidence="19" key="11">
    <citation type="journal article" date="2014" name="PLoS Genet.">
        <title>Tetraspanin (TSP-17) protects dopaminergic neurons against 6-OHDA-induced neurodegeneration in C. elegans.</title>
        <authorList>
            <person name="Masoudi N."/>
            <person name="Ibanez-Cruceyra P."/>
            <person name="Offenburger S.L."/>
            <person name="Holmes A."/>
            <person name="Gartner A."/>
        </authorList>
    </citation>
    <scope>FUNCTION</scope>
</reference>
<reference evidence="19" key="12">
    <citation type="journal article" date="2015" name="J. Neurosci.">
        <title>DOP-2 D2-Like Receptor Regulates UNC-7 Innexins to Attenuate Recurrent Sensory Motor Neurons during C. elegans Copulation.</title>
        <authorList>
            <person name="Correa P.A."/>
            <person name="Gruninger T."/>
            <person name="Garcia L.R."/>
        </authorList>
    </citation>
    <scope>FUNCTION</scope>
    <scope>TISSUE SPECIFICITY</scope>
</reference>
<reference evidence="19" key="13">
    <citation type="journal article" date="2020" name="Synapse">
        <title>Synaptic vesicle fusion is modulated through feedback inhibition by dopamine auto-receptors.</title>
        <authorList>
            <person name="Formisano R."/>
            <person name="Mersha M.D."/>
            <person name="Caplan J."/>
            <person name="Singh A."/>
            <person name="Rankin C.H."/>
            <person name="Tavernarakis N."/>
            <person name="Dhillon H.S."/>
        </authorList>
    </citation>
    <scope>FUNCTION</scope>
</reference>
<proteinExistence type="evidence at protein level"/>
<dbReference type="EMBL" id="AB125701">
    <property type="protein sequence ID" value="BAD01495.1"/>
    <property type="molecule type" value="mRNA"/>
</dbReference>
<dbReference type="EMBL" id="AB125702">
    <property type="protein sequence ID" value="BAD01496.1"/>
    <property type="molecule type" value="mRNA"/>
</dbReference>
<dbReference type="EMBL" id="BX284605">
    <property type="protein sequence ID" value="CAB03199.3"/>
    <property type="molecule type" value="Genomic_DNA"/>
</dbReference>
<dbReference type="EMBL" id="BX284605">
    <property type="protein sequence ID" value="CBY85347.1"/>
    <property type="molecule type" value="Genomic_DNA"/>
</dbReference>
<dbReference type="EMBL" id="BX284605">
    <property type="protein sequence ID" value="CCE72138.1"/>
    <property type="molecule type" value="Genomic_DNA"/>
</dbReference>
<dbReference type="EMBL" id="BX284605">
    <property type="protein sequence ID" value="VGM69570.1"/>
    <property type="molecule type" value="Genomic_DNA"/>
</dbReference>
<dbReference type="EMBL" id="BX284605">
    <property type="protein sequence ID" value="VGM69571.1"/>
    <property type="molecule type" value="Genomic_DNA"/>
</dbReference>
<dbReference type="EMBL" id="BX284605">
    <property type="protein sequence ID" value="VGM69572.1"/>
    <property type="molecule type" value="Genomic_DNA"/>
</dbReference>
<dbReference type="PIR" id="T23551">
    <property type="entry name" value="T23551"/>
</dbReference>
<dbReference type="RefSeq" id="NP_001024047.1">
    <molecule id="E7EM37-2"/>
    <property type="nucleotide sequence ID" value="NM_001028876.4"/>
</dbReference>
<dbReference type="RefSeq" id="NP_001024048.1">
    <property type="nucleotide sequence ID" value="NM_001028877.3"/>
</dbReference>
<dbReference type="RefSeq" id="NP_001256126.1">
    <molecule id="E7EM37-1"/>
    <property type="nucleotide sequence ID" value="NM_001269197.4"/>
</dbReference>
<dbReference type="RefSeq" id="NP_001256127.1">
    <molecule id="E7EM37-3"/>
    <property type="nucleotide sequence ID" value="NM_001269198.4"/>
</dbReference>
<dbReference type="RefSeq" id="NP_001360548.1">
    <molecule id="E7EM37-4"/>
    <property type="nucleotide sequence ID" value="NM_001373077.2"/>
</dbReference>
<dbReference type="RefSeq" id="NP_001360549.1">
    <molecule id="E7EM37-5"/>
    <property type="nucleotide sequence ID" value="NM_001373076.2"/>
</dbReference>
<dbReference type="RefSeq" id="NP_001360550.1">
    <molecule id="E7EM37-6"/>
    <property type="nucleotide sequence ID" value="NM_001373078.2"/>
</dbReference>
<dbReference type="SMR" id="E7EM37"/>
<dbReference type="FunCoup" id="E7EM37">
    <property type="interactions" value="128"/>
</dbReference>
<dbReference type="IntAct" id="E7EM37">
    <property type="interactions" value="1"/>
</dbReference>
<dbReference type="STRING" id="6239.K09G1.4c.1"/>
<dbReference type="GlyCosmos" id="E7EM37">
    <property type="glycosylation" value="1 site, No reported glycans"/>
</dbReference>
<dbReference type="PaxDb" id="6239-K09G1.4c"/>
<dbReference type="EnsemblMetazoa" id="K09G1.4a.1">
    <molecule id="E7EM37-2"/>
    <property type="protein sequence ID" value="K09G1.4a.1"/>
    <property type="gene ID" value="WBGene00001053"/>
</dbReference>
<dbReference type="EnsemblMetazoa" id="K09G1.4c.1">
    <molecule id="E7EM37-1"/>
    <property type="protein sequence ID" value="K09G1.4c.1"/>
    <property type="gene ID" value="WBGene00001053"/>
</dbReference>
<dbReference type="EnsemblMetazoa" id="K09G1.4d.1">
    <molecule id="E7EM37-3"/>
    <property type="protein sequence ID" value="K09G1.4d.1"/>
    <property type="gene ID" value="WBGene00001053"/>
</dbReference>
<dbReference type="EnsemblMetazoa" id="K09G1.4e.1">
    <molecule id="E7EM37-4"/>
    <property type="protein sequence ID" value="K09G1.4e.1"/>
    <property type="gene ID" value="WBGene00001053"/>
</dbReference>
<dbReference type="EnsemblMetazoa" id="K09G1.4f.1">
    <molecule id="E7EM37-5"/>
    <property type="protein sequence ID" value="K09G1.4f.1"/>
    <property type="gene ID" value="WBGene00001053"/>
</dbReference>
<dbReference type="EnsemblMetazoa" id="K09G1.4g.1">
    <molecule id="E7EM37-6"/>
    <property type="protein sequence ID" value="K09G1.4g.1"/>
    <property type="gene ID" value="WBGene00001053"/>
</dbReference>
<dbReference type="GeneID" id="179347"/>
<dbReference type="KEGG" id="cel:CELE_K09G1.4"/>
<dbReference type="AGR" id="WB:WBGene00001053"/>
<dbReference type="CTD" id="179347"/>
<dbReference type="WormBase" id="K09G1.4a">
    <molecule id="E7EM37-2"/>
    <property type="protein sequence ID" value="CE35993"/>
    <property type="gene ID" value="WBGene00001053"/>
    <property type="gene designation" value="dop-2"/>
</dbReference>
<dbReference type="WormBase" id="K09G1.4c">
    <molecule id="E7EM37-1"/>
    <property type="protein sequence ID" value="CE45633"/>
    <property type="gene ID" value="WBGene00001053"/>
    <property type="gene designation" value="dop-2"/>
</dbReference>
<dbReference type="WormBase" id="K09G1.4d">
    <molecule id="E7EM37-3"/>
    <property type="protein sequence ID" value="CE46806"/>
    <property type="gene ID" value="WBGene00001053"/>
    <property type="gene designation" value="dop-2"/>
</dbReference>
<dbReference type="WormBase" id="K09G1.4e">
    <molecule id="E7EM37-4"/>
    <property type="protein sequence ID" value="CE53007"/>
    <property type="gene ID" value="WBGene00001053"/>
    <property type="gene designation" value="dop-2"/>
</dbReference>
<dbReference type="WormBase" id="K09G1.4f">
    <molecule id="E7EM37-5"/>
    <property type="protein sequence ID" value="CE53034"/>
    <property type="gene ID" value="WBGene00001053"/>
    <property type="gene designation" value="dop-2"/>
</dbReference>
<dbReference type="WormBase" id="K09G1.4g">
    <molecule id="E7EM37-6"/>
    <property type="protein sequence ID" value="CE52992"/>
    <property type="gene ID" value="WBGene00001053"/>
    <property type="gene designation" value="dop-2"/>
</dbReference>
<dbReference type="eggNOG" id="KOG3656">
    <property type="taxonomic scope" value="Eukaryota"/>
</dbReference>
<dbReference type="GeneTree" id="ENSGT00940000164988"/>
<dbReference type="HOGENOM" id="CLU_009579_11_1_1"/>
<dbReference type="InParanoid" id="E7EM37"/>
<dbReference type="OMA" id="MEAGETW"/>
<dbReference type="OrthoDB" id="6358729at2759"/>
<dbReference type="Reactome" id="R-CEL-390650">
    <property type="pathway name" value="Histamine receptors"/>
</dbReference>
<dbReference type="Reactome" id="R-CEL-390651">
    <property type="pathway name" value="Dopamine receptors"/>
</dbReference>
<dbReference type="Reactome" id="R-CEL-390666">
    <property type="pathway name" value="Serotonin receptors"/>
</dbReference>
<dbReference type="Reactome" id="R-CEL-418555">
    <property type="pathway name" value="G alpha (s) signalling events"/>
</dbReference>
<dbReference type="Reactome" id="R-CEL-418594">
    <property type="pathway name" value="G alpha (i) signalling events"/>
</dbReference>
<dbReference type="PRO" id="PR:E7EM37"/>
<dbReference type="Proteomes" id="UP000001940">
    <property type="component" value="Chromosome V"/>
</dbReference>
<dbReference type="Bgee" id="WBGene00001053">
    <property type="expression patterns" value="Expressed in larva and 3 other cell types or tissues"/>
</dbReference>
<dbReference type="GO" id="GO:0030425">
    <property type="term" value="C:dendrite"/>
    <property type="evidence" value="ECO:0000318"/>
    <property type="project" value="GO_Central"/>
</dbReference>
<dbReference type="GO" id="GO:0005886">
    <property type="term" value="C:plasma membrane"/>
    <property type="evidence" value="ECO:0000318"/>
    <property type="project" value="GO_Central"/>
</dbReference>
<dbReference type="GO" id="GO:0045202">
    <property type="term" value="C:synapse"/>
    <property type="evidence" value="ECO:0007669"/>
    <property type="project" value="GOC"/>
</dbReference>
<dbReference type="GO" id="GO:0001591">
    <property type="term" value="F:dopamine neurotransmitter receptor activity, coupled via Gi/Go"/>
    <property type="evidence" value="ECO:0000315"/>
    <property type="project" value="WormBase"/>
</dbReference>
<dbReference type="GO" id="GO:0004993">
    <property type="term" value="F:G protein-coupled serotonin receptor activity"/>
    <property type="evidence" value="ECO:0000318"/>
    <property type="project" value="GO_Central"/>
</dbReference>
<dbReference type="GO" id="GO:0030594">
    <property type="term" value="F:neurotransmitter receptor activity"/>
    <property type="evidence" value="ECO:0000318"/>
    <property type="project" value="GO_Central"/>
</dbReference>
<dbReference type="GO" id="GO:0071419">
    <property type="term" value="P:cellular response to amphetamine"/>
    <property type="evidence" value="ECO:0000315"/>
    <property type="project" value="UniProtKB"/>
</dbReference>
<dbReference type="GO" id="GO:0071316">
    <property type="term" value="P:cellular response to nicotine"/>
    <property type="evidence" value="ECO:0000315"/>
    <property type="project" value="UniProtKB"/>
</dbReference>
<dbReference type="GO" id="GO:0007268">
    <property type="term" value="P:chemical synaptic transmission"/>
    <property type="evidence" value="ECO:0000318"/>
    <property type="project" value="GO_Central"/>
</dbReference>
<dbReference type="GO" id="GO:0007212">
    <property type="term" value="P:G protein-coupled dopamine receptor signaling pathway"/>
    <property type="evidence" value="ECO:0000315"/>
    <property type="project" value="WormBase"/>
</dbReference>
<dbReference type="GO" id="GO:0007187">
    <property type="term" value="P:G protein-coupled receptor signaling pathway, coupled to cyclic nucleotide second messenger"/>
    <property type="evidence" value="ECO:0000318"/>
    <property type="project" value="GO_Central"/>
</dbReference>
<dbReference type="GO" id="GO:0033602">
    <property type="term" value="P:negative regulation of dopamine secretion"/>
    <property type="evidence" value="ECO:0000315"/>
    <property type="project" value="UniProtKB"/>
</dbReference>
<dbReference type="GO" id="GO:0090327">
    <property type="term" value="P:negative regulation of locomotion involved in locomotory behavior"/>
    <property type="evidence" value="ECO:0000315"/>
    <property type="project" value="UniProtKB"/>
</dbReference>
<dbReference type="GO" id="GO:0090326">
    <property type="term" value="P:positive regulation of locomotion involved in locomotory behavior"/>
    <property type="evidence" value="ECO:0000315"/>
    <property type="project" value="UniProtKB"/>
</dbReference>
<dbReference type="GO" id="GO:1902437">
    <property type="term" value="P:positive regulation of male mating behavior"/>
    <property type="evidence" value="ECO:0000315"/>
    <property type="project" value="UniProtKB"/>
</dbReference>
<dbReference type="GO" id="GO:1902435">
    <property type="term" value="P:regulation of male mating behavior"/>
    <property type="evidence" value="ECO:0000315"/>
    <property type="project" value="UniProtKB"/>
</dbReference>
<dbReference type="GO" id="GO:1902847">
    <property type="term" value="P:regulation of neuronal signal transduction"/>
    <property type="evidence" value="ECO:0000315"/>
    <property type="project" value="UniProtKB"/>
</dbReference>
<dbReference type="GO" id="GO:0032094">
    <property type="term" value="P:response to food"/>
    <property type="evidence" value="ECO:0000315"/>
    <property type="project" value="WormBase"/>
</dbReference>
<dbReference type="GO" id="GO:0034609">
    <property type="term" value="P:spicule insertion"/>
    <property type="evidence" value="ECO:0000315"/>
    <property type="project" value="UniProtKB"/>
</dbReference>
<dbReference type="GO" id="GO:0034608">
    <property type="term" value="P:vulval location"/>
    <property type="evidence" value="ECO:0000315"/>
    <property type="project" value="UniProtKB"/>
</dbReference>
<dbReference type="CDD" id="cd15053">
    <property type="entry name" value="7tmA_D2-like_dopamine_R"/>
    <property type="match status" value="1"/>
</dbReference>
<dbReference type="FunFam" id="1.20.1070.10:FF:000377">
    <property type="entry name" value="DOPamine receptor"/>
    <property type="match status" value="1"/>
</dbReference>
<dbReference type="FunFam" id="1.20.1070.10:FF:000387">
    <property type="entry name" value="DOPamine receptor"/>
    <property type="match status" value="1"/>
</dbReference>
<dbReference type="Gene3D" id="1.20.1070.10">
    <property type="entry name" value="Rhodopsin 7-helix transmembrane proteins"/>
    <property type="match status" value="2"/>
</dbReference>
<dbReference type="InterPro" id="IPR000276">
    <property type="entry name" value="GPCR_Rhodpsn"/>
</dbReference>
<dbReference type="InterPro" id="IPR017452">
    <property type="entry name" value="GPCR_Rhodpsn_7TM"/>
</dbReference>
<dbReference type="PANTHER" id="PTHR24248">
    <property type="entry name" value="ADRENERGIC RECEPTOR-RELATED G-PROTEIN COUPLED RECEPTOR"/>
    <property type="match status" value="1"/>
</dbReference>
<dbReference type="PANTHER" id="PTHR24248:SF125">
    <property type="entry name" value="DOPAMINE D2-LIKE RECEPTOR"/>
    <property type="match status" value="1"/>
</dbReference>
<dbReference type="Pfam" id="PF00001">
    <property type="entry name" value="7tm_1"/>
    <property type="match status" value="2"/>
</dbReference>
<dbReference type="PRINTS" id="PR00237">
    <property type="entry name" value="GPCRRHODOPSN"/>
</dbReference>
<dbReference type="SMART" id="SM01381">
    <property type="entry name" value="7TM_GPCR_Srsx"/>
    <property type="match status" value="1"/>
</dbReference>
<dbReference type="SUPFAM" id="SSF81321">
    <property type="entry name" value="Family A G protein-coupled receptor-like"/>
    <property type="match status" value="2"/>
</dbReference>
<dbReference type="PROSITE" id="PS00237">
    <property type="entry name" value="G_PROTEIN_RECEP_F1_1"/>
    <property type="match status" value="1"/>
</dbReference>
<dbReference type="PROSITE" id="PS50262">
    <property type="entry name" value="G_PROTEIN_RECEP_F1_2"/>
    <property type="match status" value="1"/>
</dbReference>
<sequence length="849" mass="94160">MEAGETWNVSLEWPPPSLDLSTITQTPSTIVGSGIPLNYAGLSLIVIPLITLLGNLLVIISVLRYRALQSAINFLILGLAVADLLVAIIVMPYAVYVYVTNGDWYLGNLMCDIYMASDVCCSTASILLLAVISFDRYRAVSLPIQYSRQSQNVKRVWTLIAVIWLVSLTLASPMVFGVNVRPPDANPYECRFYNAEFSILSSMISFVIPCFLVLFVYIRIIIALKKREKAAKMRREKNTIAHGLTMRPDTGEEQVDEEAAGRIVAGPVVNVMMAALPSMTRRMRQFERHRRAIELAGDEEWEEDELDVMDECCGGDDAGDDDDDYHADNGQGVVEASAPRTTSMLRRIINAASVGTANSTAQSVASASGMPAFFAQNISTTSPSSSSCARTTTTTSAIPKASGDLPLPMLLNEREFGNSSTPRSSLESLSENVNVITNDFVSENCTTFSRRSSYADDSQPTSSQTSSGDGRSYSIKGQKRFRNLSRNYSTKHHRKVVKVNRGNSRNNSRTASITNQSDDALIPAIIRTISRKSPRLFRRDKTDIKKHSMILANPITEPPKEYRRVSMPIHPTNSQTETETISASRDIENLPTTTISRSTTANSAELLGSPDDFEKFPALITETVLEDVLAETREGCFMQPTVSFALTVREMEGNALNNLKGCSVESSRRVSQVDPPLAIQILTRPSLPHLDLQRMDSIGTTCSSKTRADSLRSVDSKGSKKSNRNGIAVKLVKRAIKHEHSLKRKVSKAQRKEKRATKTLGVVVGVFLVCWVPFFVINILNAVCILLNKDSCQVGYDLFFYCTWIGYMNSFMNPIIYTIFNTEFRRAFKSIIFGRNSTRHHFSNKQAHV</sequence>
<name>DOPR2_CAEEL</name>
<keyword id="KW-0025">Alternative splicing</keyword>
<keyword id="KW-1003">Cell membrane</keyword>
<keyword id="KW-1015">Disulfide bond</keyword>
<keyword id="KW-0297">G-protein coupled receptor</keyword>
<keyword id="KW-0325">Glycoprotein</keyword>
<keyword id="KW-0472">Membrane</keyword>
<keyword id="KW-0675">Receptor</keyword>
<keyword id="KW-1185">Reference proteome</keyword>
<keyword id="KW-0807">Transducer</keyword>
<keyword id="KW-0812">Transmembrane</keyword>
<keyword id="KW-1133">Transmembrane helix</keyword>
<evidence type="ECO:0000255" key="1"/>
<evidence type="ECO:0000255" key="2">
    <source>
        <dbReference type="PROSITE-ProRule" id="PRU00498"/>
    </source>
</evidence>
<evidence type="ECO:0000255" key="3">
    <source>
        <dbReference type="PROSITE-ProRule" id="PRU00521"/>
    </source>
</evidence>
<evidence type="ECO:0000256" key="4">
    <source>
        <dbReference type="SAM" id="MobiDB-lite"/>
    </source>
</evidence>
<evidence type="ECO:0000269" key="5">
    <source>
    </source>
</evidence>
<evidence type="ECO:0000269" key="6">
    <source>
    </source>
</evidence>
<evidence type="ECO:0000269" key="7">
    <source>
    </source>
</evidence>
<evidence type="ECO:0000269" key="8">
    <source>
    </source>
</evidence>
<evidence type="ECO:0000269" key="9">
    <source>
    </source>
</evidence>
<evidence type="ECO:0000269" key="10">
    <source>
    </source>
</evidence>
<evidence type="ECO:0000269" key="11">
    <source>
    </source>
</evidence>
<evidence type="ECO:0000269" key="12">
    <source>
    </source>
</evidence>
<evidence type="ECO:0000269" key="13">
    <source>
    </source>
</evidence>
<evidence type="ECO:0000269" key="14">
    <source>
    </source>
</evidence>
<evidence type="ECO:0000269" key="15">
    <source>
    </source>
</evidence>
<evidence type="ECO:0000269" key="16">
    <source>
    </source>
</evidence>
<evidence type="ECO:0000303" key="17">
    <source>
    </source>
</evidence>
<evidence type="ECO:0000303" key="18">
    <source>
    </source>
</evidence>
<evidence type="ECO:0000305" key="19"/>
<evidence type="ECO:0000305" key="20">
    <source>
    </source>
</evidence>
<evidence type="ECO:0000312" key="21">
    <source>
        <dbReference type="Proteomes" id="UP000001940"/>
    </source>
</evidence>
<evidence type="ECO:0000312" key="22">
    <source>
        <dbReference type="WormBase" id="K09G1.4a"/>
    </source>
</evidence>
<evidence type="ECO:0000312" key="23">
    <source>
        <dbReference type="WormBase" id="K09G1.4c"/>
    </source>
</evidence>
<evidence type="ECO:0000312" key="24">
    <source>
        <dbReference type="WormBase" id="K09G1.4d"/>
    </source>
</evidence>
<evidence type="ECO:0000312" key="25">
    <source>
        <dbReference type="WormBase" id="K09G1.4e"/>
    </source>
</evidence>
<evidence type="ECO:0000312" key="26">
    <source>
        <dbReference type="WormBase" id="K09G1.4f"/>
    </source>
</evidence>
<evidence type="ECO:0000312" key="27">
    <source>
        <dbReference type="WormBase" id="K09G1.4g"/>
    </source>
</evidence>
<comment type="function">
    <text evidence="5 7 10 12 13 14 15 16">G-protein coupled receptor which binds to the neurotransmitter dopamine with high affinity leading to the activation of an associated G-protein and downstream signaling pathways (PubMed:12887685). Couples to G-proteins to inhibit adenylate cyclase (AC) activity and cAMP production (PubMed:12887685). Inhibits synaptic vesicle fusion to negatively regulate the release of dopamine at dopaminergic neuron synapses (PubMed:31494966). Antagonizes octopamine signaling in response to food by promoting the dopamine-mediated suppression of crh-1/CREB1 transcription factor activation in cholinergic SIA neurons (PubMed:19609300). This is most likely in association with the G(o)-alpha G-protein subunit goa-1 (PubMed:19609300). In association with the G-alpha protein gpa-14, modulates two types of learning behavior: touch habituation and chemosensory associative conditioning (PubMed:23607404). May act partly via tsp-17 to negatively regulate dopamine reuptake transporter dat-1 activity (PubMed:25474638). Plays a role in behavioral plasticity and regulates the decision-making process when conflicting alternatives are present (PubMed:25536037). Promotes male mating behavior by antagonizing acetylcholine signaling to control the protrusions of copulatory spicules from the tail of males during hermaphrodite vulval location (PubMed:23166505, PubMed:26156999). Modulates unc-7 activity at gap junctions to promote inhibitory neuronal signaling transduction between chemosensory and mechanosensory neurons, and thus ensures spicule insertion attempts are confined to the hermaphrodite vulva during copulation (PubMed:26156999).</text>
</comment>
<comment type="function">
    <molecule>Isoform a</molecule>
    <text evidence="5">G-protein coupled receptor which binds to the neurotransmitter dopamine with high affinity leading to the activation of an associated G-protein and downstream signaling pathways (PubMed:12887685). Couples to G-proteins to inhibit adenylate cyclase (AC) activity and cAMP production (PubMed:12887685).</text>
</comment>
<comment type="subunit">
    <text evidence="9">Interacts (via C-terminus) with the G-alpha protein gpa-14; the interaction is direct.</text>
</comment>
<comment type="interaction">
    <interactant intactId="EBI-6082999">
        <id>E7EM37</id>
    </interactant>
    <interactant intactId="EBI-2923711">
        <id>Q9BIG2</id>
        <label>gpa-14</label>
    </interactant>
    <organismsDiffer>false</organismsDiffer>
    <experiments>4</experiments>
</comment>
<comment type="subcellular location">
    <subcellularLocation>
        <location evidence="20">Cell membrane</location>
        <topology evidence="1">Multi-pass membrane protein</topology>
    </subcellularLocation>
</comment>
<comment type="alternative products">
    <event type="alternative splicing"/>
    <isoform>
        <id>E7EM37-1</id>
        <name evidence="23">c</name>
        <name evidence="18">CeDOP-2XL</name>
        <sequence type="displayed"/>
    </isoform>
    <isoform>
        <id>E7EM37-2</id>
        <name evidence="22">a</name>
        <name evidence="17">CeDOP2S</name>
        <sequence type="described" ref="VSP_060562"/>
    </isoform>
    <isoform>
        <id>E7EM37-3</id>
        <name evidence="24">d</name>
        <sequence type="described" ref="VSP_060563"/>
    </isoform>
    <isoform>
        <id>E7EM37-4</id>
        <name evidence="25">e</name>
        <sequence type="described" ref="VSP_060563 VSP_060564"/>
    </isoform>
    <isoform>
        <id>E7EM37-5</id>
        <name evidence="26">f</name>
        <sequence type="described" ref="VSP_060564"/>
    </isoform>
    <isoform>
        <id>E7EM37-6</id>
        <name evidence="27">g</name>
        <sequence type="described" ref="VSP_060562 VSP_060564"/>
    </isoform>
</comment>
<comment type="tissue specificity">
    <text evidence="5 6 7 10 15">Expressed in all dopaminergic neurons (PubMed:12887685). Expressed in neurons around the nerve ring and the posterior side of the body including PDE neurons (PubMed:12887685). In hermaphrodites, expressed in the head and tail ganglia including in the RIA interneuron pair, and in a subset of sublateral interneurons and the PDA neuron in the tail (PubMed:14568548). Expressed in cholinergic SIA neurons (PubMed:19609300). Also expressed in the male tail (PubMed:12887685, PubMed:23166505, PubMed:26156999). In males, expressed in the dorsal spicule protractor, ventral spicule protractor, dorsal spicule retractor and ventral spicule retractor muscles and the sensory post-cloacal sensilla B (PCB) neuron (PubMed:23166505). In males, expressed in the sensory hook neurons HOA (PubMed:26156999).</text>
</comment>
<comment type="developmental stage">
    <text evidence="6">Expressed in the head and tail ganglia of larval hermaphrodites.</text>
</comment>
<comment type="miscellaneous">
    <text evidence="8 11">Modulates drug-mediated behavior, such as the response to nicotine and amphetamine (PubMed:20410438, PubMed:23351035). Plays a role in the sensitivity to the drug nicotine and promotes movement towards nicotine sources (PubMed:23351035). Plays a role in promoting amphetamine-induced loss of motility in water, termed swimming-induced paralysis (PubMed:20410438).</text>
</comment>
<comment type="similarity">
    <text evidence="3">Belongs to the G-protein coupled receptor 1 family.</text>
</comment>
<gene>
    <name evidence="23" type="primary">dop-2</name>
    <name evidence="23" type="synonym">dop-2L</name>
    <name evidence="23" type="ORF">K09G1.4</name>
</gene>
<accession>E7EM37</accession>
<accession>A0A486WWQ7</accession>
<accession>A0A486WXI1</accession>
<accession>A0A486WYH7</accession>
<accession>G5EBI6</accession>
<accession>G5EEM7</accession>
<accession>H2L2G2</accession>
<feature type="chain" id="PRO_0000449488" description="Dopamine receptor 2">
    <location>
        <begin position="1"/>
        <end position="849"/>
    </location>
</feature>
<feature type="topological domain" description="Extracellular" evidence="19">
    <location>
        <begin position="1"/>
        <end position="39"/>
    </location>
</feature>
<feature type="transmembrane region" description="Helical; Name=1" evidence="1">
    <location>
        <begin position="40"/>
        <end position="60"/>
    </location>
</feature>
<feature type="topological domain" description="Cytoplasmic" evidence="19">
    <location>
        <begin position="61"/>
        <end position="70"/>
    </location>
</feature>
<feature type="transmembrane region" description="Helical; Name=2" evidence="1">
    <location>
        <begin position="71"/>
        <end position="91"/>
    </location>
</feature>
<feature type="topological domain" description="Extracellular" evidence="19">
    <location>
        <begin position="92"/>
        <end position="112"/>
    </location>
</feature>
<feature type="transmembrane region" description="Helical; Name=3" evidence="1">
    <location>
        <begin position="113"/>
        <end position="133"/>
    </location>
</feature>
<feature type="topological domain" description="Cytoplasmic" evidence="19">
    <location>
        <begin position="134"/>
        <end position="155"/>
    </location>
</feature>
<feature type="transmembrane region" description="Helical; Name=4" evidence="1">
    <location>
        <begin position="156"/>
        <end position="176"/>
    </location>
</feature>
<feature type="topological domain" description="Extracellular" evidence="19">
    <location>
        <begin position="177"/>
        <end position="203"/>
    </location>
</feature>
<feature type="transmembrane region" description="Helical; Name=5" evidence="1">
    <location>
        <begin position="204"/>
        <end position="224"/>
    </location>
</feature>
<feature type="topological domain" description="Cytoplasmic" evidence="19">
    <location>
        <begin position="225"/>
        <end position="759"/>
    </location>
</feature>
<feature type="transmembrane region" description="Helical; Name=6" evidence="1">
    <location>
        <begin position="760"/>
        <end position="780"/>
    </location>
</feature>
<feature type="topological domain" description="Extracellular" evidence="19">
    <location>
        <begin position="781"/>
        <end position="798"/>
    </location>
</feature>
<feature type="transmembrane region" description="Helical; Name=7" evidence="1">
    <location>
        <begin position="799"/>
        <end position="819"/>
    </location>
</feature>
<feature type="topological domain" description="Cytoplasmic" evidence="19">
    <location>
        <begin position="820"/>
        <end position="849"/>
    </location>
</feature>
<feature type="region of interest" description="Required for the interaction with gpa-14" evidence="9">
    <location>
        <begin position="183"/>
        <end position="849"/>
    </location>
</feature>
<feature type="region of interest" description="Disordered" evidence="4">
    <location>
        <begin position="450"/>
        <end position="515"/>
    </location>
</feature>
<feature type="compositionally biased region" description="Low complexity" evidence="4">
    <location>
        <begin position="457"/>
        <end position="470"/>
    </location>
</feature>
<feature type="compositionally biased region" description="Basic residues" evidence="4">
    <location>
        <begin position="477"/>
        <end position="498"/>
    </location>
</feature>
<feature type="compositionally biased region" description="Polar residues" evidence="4">
    <location>
        <begin position="501"/>
        <end position="515"/>
    </location>
</feature>
<feature type="glycosylation site" description="N-linked (GlcNAc...) asparagine" evidence="2">
    <location>
        <position position="8"/>
    </location>
</feature>
<feature type="disulfide bond" evidence="3">
    <location>
        <begin position="111"/>
        <end position="190"/>
    </location>
</feature>
<feature type="splice variant" id="VSP_060562" description="In isoform a and isoform g." evidence="19">
    <original>VVNVMMAALPSMTRRMRQFERHRRAIELAGDEEWEEDELDVMDECCGGDDAGDDDDDYHADNGQGVVEASAPRTTSMLRRIINAASVGTANSTAQSVASASGMPAFFAQNISTTSPSSSSCARTTTTTSAIPKASGDLPLPMLLN</original>
    <variation>D</variation>
    <location>
        <begin position="268"/>
        <end position="412"/>
    </location>
</feature>
<feature type="splice variant" id="VSP_060563" description="In isoform d and isoform e." evidence="19">
    <original>GDEEWEEDELDVMDECCGGDDAGDDDDDYHADNGQGVVEASAPRTTSMLRRIINAASVGTANSTAQSVASASGMPAFFAQNISTTSPSSSSCARTTTTTSAIPKASGDLPLPMLLN</original>
    <variation>D</variation>
    <location>
        <begin position="297"/>
        <end position="412"/>
    </location>
</feature>
<feature type="splice variant" id="VSP_060564" description="In isoform e, isoform f and isoform g." evidence="19">
    <location>
        <begin position="598"/>
        <end position="602"/>
    </location>
</feature>
<feature type="mutagenesis site" description="In Isoform c; abolishes interaction with gpa-14." evidence="9">
    <location>
        <begin position="183"/>
        <end position="849"/>
    </location>
</feature>
<feature type="sequence conflict" description="In Ref. 1; BAD01495." evidence="19" ref="1">
    <original>GDLPLPMLLN</original>
    <variation>D</variation>
    <location>
        <begin position="403"/>
        <end position="412"/>
    </location>
</feature>
<protein>
    <recommendedName>
        <fullName evidence="23">Dopamine receptor 2</fullName>
    </recommendedName>
    <alternativeName>
        <fullName evidence="19">Dopamine D2-like receptor dop-2</fullName>
    </alternativeName>
</protein>